<comment type="function">
    <text evidence="2">Protease subunit of a proteasome-like degradation complex believed to be a general protein degrading machinery.</text>
</comment>
<comment type="catalytic activity">
    <reaction evidence="2">
        <text>ATP-dependent cleavage of peptide bonds with broad specificity.</text>
        <dbReference type="EC" id="3.4.25.2"/>
    </reaction>
</comment>
<comment type="activity regulation">
    <text evidence="2">Allosterically activated by HslU binding.</text>
</comment>
<comment type="subunit">
    <text evidence="2">A double ring-shaped homohexamer of HslV is capped on each side by a ring-shaped HslU homohexamer. The assembly of the HslU/HslV complex is dependent on binding of ATP.</text>
</comment>
<comment type="subcellular location">
    <subcellularLocation>
        <location evidence="2">Cytoplasm</location>
    </subcellularLocation>
</comment>
<comment type="similarity">
    <text evidence="2">Belongs to the peptidase T1B family. HslV subfamily.</text>
</comment>
<comment type="sequence caution" evidence="3">
    <conflict type="erroneous initiation">
        <sequence resource="EMBL-CDS" id="AAK85868"/>
    </conflict>
</comment>
<accession>Q8UJ88</accession>
<proteinExistence type="inferred from homology"/>
<feature type="initiator methionine" description="Removed" evidence="1">
    <location>
        <position position="1"/>
    </location>
</feature>
<feature type="chain" id="PRO_0000148075" description="ATP-dependent protease subunit HslV">
    <location>
        <begin position="2"/>
        <end position="174"/>
    </location>
</feature>
<feature type="active site" evidence="2">
    <location>
        <position position="2"/>
    </location>
</feature>
<feature type="binding site" evidence="2">
    <location>
        <position position="156"/>
    </location>
    <ligand>
        <name>Na(+)</name>
        <dbReference type="ChEBI" id="CHEBI:29101"/>
    </ligand>
</feature>
<feature type="binding site" evidence="2">
    <location>
        <position position="159"/>
    </location>
    <ligand>
        <name>Na(+)</name>
        <dbReference type="ChEBI" id="CHEBI:29101"/>
    </ligand>
</feature>
<feature type="binding site" evidence="2">
    <location>
        <position position="162"/>
    </location>
    <ligand>
        <name>Na(+)</name>
        <dbReference type="ChEBI" id="CHEBI:29101"/>
    </ligand>
</feature>
<dbReference type="EC" id="3.4.25.2" evidence="2"/>
<dbReference type="EMBL" id="AE007869">
    <property type="protein sequence ID" value="AAK85868.2"/>
    <property type="status" value="ALT_INIT"/>
    <property type="molecule type" value="Genomic_DNA"/>
</dbReference>
<dbReference type="PIR" id="AE2582">
    <property type="entry name" value="AE2582"/>
</dbReference>
<dbReference type="PIR" id="C97364">
    <property type="entry name" value="C97364"/>
</dbReference>
<dbReference type="RefSeq" id="NP_353083.4">
    <property type="nucleotide sequence ID" value="NC_003062.2"/>
</dbReference>
<dbReference type="RefSeq" id="WP_003521197.1">
    <property type="nucleotide sequence ID" value="NC_003062.2"/>
</dbReference>
<dbReference type="SMR" id="Q8UJ88"/>
<dbReference type="STRING" id="176299.Atu0044"/>
<dbReference type="MEROPS" id="T01.006"/>
<dbReference type="EnsemblBacteria" id="AAK85868">
    <property type="protein sequence ID" value="AAK85868"/>
    <property type="gene ID" value="Atu0044"/>
</dbReference>
<dbReference type="GeneID" id="1132082"/>
<dbReference type="KEGG" id="atu:Atu0044"/>
<dbReference type="PATRIC" id="fig|176299.10.peg.44"/>
<dbReference type="eggNOG" id="COG5405">
    <property type="taxonomic scope" value="Bacteria"/>
</dbReference>
<dbReference type="HOGENOM" id="CLU_093872_1_0_5"/>
<dbReference type="OrthoDB" id="9804884at2"/>
<dbReference type="PhylomeDB" id="Q8UJ88"/>
<dbReference type="BioCyc" id="AGRO:ATU0044-MONOMER"/>
<dbReference type="Proteomes" id="UP000000813">
    <property type="component" value="Chromosome circular"/>
</dbReference>
<dbReference type="GO" id="GO:0009376">
    <property type="term" value="C:HslUV protease complex"/>
    <property type="evidence" value="ECO:0007669"/>
    <property type="project" value="UniProtKB-UniRule"/>
</dbReference>
<dbReference type="GO" id="GO:0005839">
    <property type="term" value="C:proteasome core complex"/>
    <property type="evidence" value="ECO:0007669"/>
    <property type="project" value="InterPro"/>
</dbReference>
<dbReference type="GO" id="GO:0046872">
    <property type="term" value="F:metal ion binding"/>
    <property type="evidence" value="ECO:0007669"/>
    <property type="project" value="UniProtKB-KW"/>
</dbReference>
<dbReference type="GO" id="GO:0004298">
    <property type="term" value="F:threonine-type endopeptidase activity"/>
    <property type="evidence" value="ECO:0007669"/>
    <property type="project" value="UniProtKB-KW"/>
</dbReference>
<dbReference type="GO" id="GO:0051603">
    <property type="term" value="P:proteolysis involved in protein catabolic process"/>
    <property type="evidence" value="ECO:0007669"/>
    <property type="project" value="InterPro"/>
</dbReference>
<dbReference type="CDD" id="cd01913">
    <property type="entry name" value="protease_HslV"/>
    <property type="match status" value="1"/>
</dbReference>
<dbReference type="FunFam" id="3.60.20.10:FF:000002">
    <property type="entry name" value="ATP-dependent protease subunit HslV"/>
    <property type="match status" value="1"/>
</dbReference>
<dbReference type="Gene3D" id="3.60.20.10">
    <property type="entry name" value="Glutamine Phosphoribosylpyrophosphate, subunit 1, domain 1"/>
    <property type="match status" value="1"/>
</dbReference>
<dbReference type="HAMAP" id="MF_00248">
    <property type="entry name" value="HslV"/>
    <property type="match status" value="1"/>
</dbReference>
<dbReference type="InterPro" id="IPR022281">
    <property type="entry name" value="ATP-dep_Prtase_HsIV_su"/>
</dbReference>
<dbReference type="InterPro" id="IPR029055">
    <property type="entry name" value="Ntn_hydrolases_N"/>
</dbReference>
<dbReference type="InterPro" id="IPR001353">
    <property type="entry name" value="Proteasome_sua/b"/>
</dbReference>
<dbReference type="InterPro" id="IPR023333">
    <property type="entry name" value="Proteasome_suB-type"/>
</dbReference>
<dbReference type="NCBIfam" id="TIGR03692">
    <property type="entry name" value="ATP_dep_HslV"/>
    <property type="match status" value="1"/>
</dbReference>
<dbReference type="NCBIfam" id="NF003964">
    <property type="entry name" value="PRK05456.1"/>
    <property type="match status" value="1"/>
</dbReference>
<dbReference type="PANTHER" id="PTHR32194:SF7">
    <property type="entry name" value="ATP-DEPENDENT PROTEASE SUBUNIT HSLV"/>
    <property type="match status" value="1"/>
</dbReference>
<dbReference type="PANTHER" id="PTHR32194">
    <property type="entry name" value="METALLOPROTEASE TLDD"/>
    <property type="match status" value="1"/>
</dbReference>
<dbReference type="Pfam" id="PF00227">
    <property type="entry name" value="Proteasome"/>
    <property type="match status" value="1"/>
</dbReference>
<dbReference type="PIRSF" id="PIRSF039093">
    <property type="entry name" value="HslV"/>
    <property type="match status" value="1"/>
</dbReference>
<dbReference type="SUPFAM" id="SSF56235">
    <property type="entry name" value="N-terminal nucleophile aminohydrolases (Ntn hydrolases)"/>
    <property type="match status" value="1"/>
</dbReference>
<dbReference type="PROSITE" id="PS51476">
    <property type="entry name" value="PROTEASOME_BETA_2"/>
    <property type="match status" value="1"/>
</dbReference>
<reference key="1">
    <citation type="journal article" date="2001" name="Science">
        <title>The genome of the natural genetic engineer Agrobacterium tumefaciens C58.</title>
        <authorList>
            <person name="Wood D.W."/>
            <person name="Setubal J.C."/>
            <person name="Kaul R."/>
            <person name="Monks D.E."/>
            <person name="Kitajima J.P."/>
            <person name="Okura V.K."/>
            <person name="Zhou Y."/>
            <person name="Chen L."/>
            <person name="Wood G.E."/>
            <person name="Almeida N.F. Jr."/>
            <person name="Woo L."/>
            <person name="Chen Y."/>
            <person name="Paulsen I.T."/>
            <person name="Eisen J.A."/>
            <person name="Karp P.D."/>
            <person name="Bovee D. Sr."/>
            <person name="Chapman P."/>
            <person name="Clendenning J."/>
            <person name="Deatherage G."/>
            <person name="Gillet W."/>
            <person name="Grant C."/>
            <person name="Kutyavin T."/>
            <person name="Levy R."/>
            <person name="Li M.-J."/>
            <person name="McClelland E."/>
            <person name="Palmieri A."/>
            <person name="Raymond C."/>
            <person name="Rouse G."/>
            <person name="Saenphimmachak C."/>
            <person name="Wu Z."/>
            <person name="Romero P."/>
            <person name="Gordon D."/>
            <person name="Zhang S."/>
            <person name="Yoo H."/>
            <person name="Tao Y."/>
            <person name="Biddle P."/>
            <person name="Jung M."/>
            <person name="Krespan W."/>
            <person name="Perry M."/>
            <person name="Gordon-Kamm B."/>
            <person name="Liao L."/>
            <person name="Kim S."/>
            <person name="Hendrick C."/>
            <person name="Zhao Z.-Y."/>
            <person name="Dolan M."/>
            <person name="Chumley F."/>
            <person name="Tingey S.V."/>
            <person name="Tomb J.-F."/>
            <person name="Gordon M.P."/>
            <person name="Olson M.V."/>
            <person name="Nester E.W."/>
        </authorList>
    </citation>
    <scope>NUCLEOTIDE SEQUENCE [LARGE SCALE GENOMIC DNA]</scope>
    <source>
        <strain>C58 / ATCC 33970</strain>
    </source>
</reference>
<reference key="2">
    <citation type="journal article" date="2001" name="Science">
        <title>Genome sequence of the plant pathogen and biotechnology agent Agrobacterium tumefaciens C58.</title>
        <authorList>
            <person name="Goodner B."/>
            <person name="Hinkle G."/>
            <person name="Gattung S."/>
            <person name="Miller N."/>
            <person name="Blanchard M."/>
            <person name="Qurollo B."/>
            <person name="Goldman B.S."/>
            <person name="Cao Y."/>
            <person name="Askenazi M."/>
            <person name="Halling C."/>
            <person name="Mullin L."/>
            <person name="Houmiel K."/>
            <person name="Gordon J."/>
            <person name="Vaudin M."/>
            <person name="Iartchouk O."/>
            <person name="Epp A."/>
            <person name="Liu F."/>
            <person name="Wollam C."/>
            <person name="Allinger M."/>
            <person name="Doughty D."/>
            <person name="Scott C."/>
            <person name="Lappas C."/>
            <person name="Markelz B."/>
            <person name="Flanagan C."/>
            <person name="Crowell C."/>
            <person name="Gurson J."/>
            <person name="Lomo C."/>
            <person name="Sear C."/>
            <person name="Strub G."/>
            <person name="Cielo C."/>
            <person name="Slater S."/>
        </authorList>
    </citation>
    <scope>NUCLEOTIDE SEQUENCE [LARGE SCALE GENOMIC DNA]</scope>
    <source>
        <strain>C58 / ATCC 33970</strain>
    </source>
</reference>
<protein>
    <recommendedName>
        <fullName evidence="2">ATP-dependent protease subunit HslV</fullName>
        <ecNumber evidence="2">3.4.25.2</ecNumber>
    </recommendedName>
</protein>
<organism>
    <name type="scientific">Agrobacterium fabrum (strain C58 / ATCC 33970)</name>
    <name type="common">Agrobacterium tumefaciens (strain C58)</name>
    <dbReference type="NCBI Taxonomy" id="176299"/>
    <lineage>
        <taxon>Bacteria</taxon>
        <taxon>Pseudomonadati</taxon>
        <taxon>Pseudomonadota</taxon>
        <taxon>Alphaproteobacteria</taxon>
        <taxon>Hyphomicrobiales</taxon>
        <taxon>Rhizobiaceae</taxon>
        <taxon>Rhizobium/Agrobacterium group</taxon>
        <taxon>Agrobacterium</taxon>
        <taxon>Agrobacterium tumefaciens complex</taxon>
    </lineage>
</organism>
<evidence type="ECO:0000250" key="1"/>
<evidence type="ECO:0000255" key="2">
    <source>
        <dbReference type="HAMAP-Rule" id="MF_00248"/>
    </source>
</evidence>
<evidence type="ECO:0000305" key="3"/>
<sequence length="174" mass="18618">MTTIITVRKGGKVVMAGDGQVSLGQTVMKGNARKVRRIGKGEVIAGFAGATADAFTLLDRLEKKLEQYPGQLMRAAVELAKDWRTDKYLRNLEAMMLVADKSTTLAITGNGDVLEPEHGAIAIGSGGNYAFAAARAMMDTDKSAEEVARQSLDIAADICVYTNHNLVVETLDAE</sequence>
<name>HSLV_AGRFC</name>
<keyword id="KW-0021">Allosteric enzyme</keyword>
<keyword id="KW-0963">Cytoplasm</keyword>
<keyword id="KW-0378">Hydrolase</keyword>
<keyword id="KW-0479">Metal-binding</keyword>
<keyword id="KW-0645">Protease</keyword>
<keyword id="KW-1185">Reference proteome</keyword>
<keyword id="KW-0915">Sodium</keyword>
<keyword id="KW-0888">Threonine protease</keyword>
<gene>
    <name evidence="2" type="primary">hslV</name>
    <name type="ordered locus">Atu0044</name>
    <name type="ORF">AGR_C_70</name>
</gene>